<gene>
    <name evidence="1" type="primary">rplF</name>
    <name type="ordered locus">xcc-b100_3444</name>
</gene>
<name>RL6_XANCB</name>
<proteinExistence type="inferred from homology"/>
<comment type="function">
    <text evidence="1">This protein binds to the 23S rRNA, and is important in its secondary structure. It is located near the subunit interface in the base of the L7/L12 stalk, and near the tRNA binding site of the peptidyltransferase center.</text>
</comment>
<comment type="subunit">
    <text evidence="1">Part of the 50S ribosomal subunit.</text>
</comment>
<comment type="similarity">
    <text evidence="1">Belongs to the universal ribosomal protein uL6 family.</text>
</comment>
<reference key="1">
    <citation type="journal article" date="2008" name="J. Biotechnol.">
        <title>The genome of Xanthomonas campestris pv. campestris B100 and its use for the reconstruction of metabolic pathways involved in xanthan biosynthesis.</title>
        <authorList>
            <person name="Vorhoelter F.-J."/>
            <person name="Schneiker S."/>
            <person name="Goesmann A."/>
            <person name="Krause L."/>
            <person name="Bekel T."/>
            <person name="Kaiser O."/>
            <person name="Linke B."/>
            <person name="Patschkowski T."/>
            <person name="Rueckert C."/>
            <person name="Schmid J."/>
            <person name="Sidhu V.K."/>
            <person name="Sieber V."/>
            <person name="Tauch A."/>
            <person name="Watt S.A."/>
            <person name="Weisshaar B."/>
            <person name="Becker A."/>
            <person name="Niehaus K."/>
            <person name="Puehler A."/>
        </authorList>
    </citation>
    <scope>NUCLEOTIDE SEQUENCE [LARGE SCALE GENOMIC DNA]</scope>
    <source>
        <strain>B100</strain>
    </source>
</reference>
<accession>B0RU67</accession>
<feature type="chain" id="PRO_1000144068" description="Large ribosomal subunit protein uL6">
    <location>
        <begin position="1"/>
        <end position="175"/>
    </location>
</feature>
<evidence type="ECO:0000255" key="1">
    <source>
        <dbReference type="HAMAP-Rule" id="MF_01365"/>
    </source>
</evidence>
<evidence type="ECO:0000305" key="2"/>
<protein>
    <recommendedName>
        <fullName evidence="1">Large ribosomal subunit protein uL6</fullName>
    </recommendedName>
    <alternativeName>
        <fullName evidence="2">50S ribosomal protein L6</fullName>
    </alternativeName>
</protein>
<sequence>MSRVAKKPVSLPKGVELNVQPELISVKGPKGTLTLQKPVGVEIAIDGDVATLSANDPSQIAITGTVRAILANMIKGVSEGFERKLELVGVGYRAAMQGKDLSLALGFSHPLVFVAPEGITLSTPTQTEILVQGADKQRVGEVAAKIRGFRPPEPYKGKGVKYAGEVIIRKEAKKA</sequence>
<dbReference type="EMBL" id="AM920689">
    <property type="protein sequence ID" value="CAP52809.1"/>
    <property type="molecule type" value="Genomic_DNA"/>
</dbReference>
<dbReference type="SMR" id="B0RU67"/>
<dbReference type="KEGG" id="xca:xcc-b100_3444"/>
<dbReference type="HOGENOM" id="CLU_065464_1_2_6"/>
<dbReference type="Proteomes" id="UP000001188">
    <property type="component" value="Chromosome"/>
</dbReference>
<dbReference type="GO" id="GO:0022625">
    <property type="term" value="C:cytosolic large ribosomal subunit"/>
    <property type="evidence" value="ECO:0007669"/>
    <property type="project" value="TreeGrafter"/>
</dbReference>
<dbReference type="GO" id="GO:0019843">
    <property type="term" value="F:rRNA binding"/>
    <property type="evidence" value="ECO:0007669"/>
    <property type="project" value="UniProtKB-UniRule"/>
</dbReference>
<dbReference type="GO" id="GO:0003735">
    <property type="term" value="F:structural constituent of ribosome"/>
    <property type="evidence" value="ECO:0007669"/>
    <property type="project" value="InterPro"/>
</dbReference>
<dbReference type="GO" id="GO:0002181">
    <property type="term" value="P:cytoplasmic translation"/>
    <property type="evidence" value="ECO:0007669"/>
    <property type="project" value="TreeGrafter"/>
</dbReference>
<dbReference type="FunFam" id="3.90.930.12:FF:000001">
    <property type="entry name" value="50S ribosomal protein L6"/>
    <property type="match status" value="1"/>
</dbReference>
<dbReference type="Gene3D" id="3.90.930.12">
    <property type="entry name" value="Ribosomal protein L6, alpha-beta domain"/>
    <property type="match status" value="2"/>
</dbReference>
<dbReference type="HAMAP" id="MF_01365_B">
    <property type="entry name" value="Ribosomal_uL6_B"/>
    <property type="match status" value="1"/>
</dbReference>
<dbReference type="InterPro" id="IPR000702">
    <property type="entry name" value="Ribosomal_uL6-like"/>
</dbReference>
<dbReference type="InterPro" id="IPR036789">
    <property type="entry name" value="Ribosomal_uL6-like_a/b-dom_sf"/>
</dbReference>
<dbReference type="InterPro" id="IPR020040">
    <property type="entry name" value="Ribosomal_uL6_a/b-dom"/>
</dbReference>
<dbReference type="InterPro" id="IPR019906">
    <property type="entry name" value="Ribosomal_uL6_bac-type"/>
</dbReference>
<dbReference type="InterPro" id="IPR002358">
    <property type="entry name" value="Ribosomal_uL6_CS"/>
</dbReference>
<dbReference type="NCBIfam" id="TIGR03654">
    <property type="entry name" value="L6_bact"/>
    <property type="match status" value="1"/>
</dbReference>
<dbReference type="PANTHER" id="PTHR11655">
    <property type="entry name" value="60S/50S RIBOSOMAL PROTEIN L6/L9"/>
    <property type="match status" value="1"/>
</dbReference>
<dbReference type="PANTHER" id="PTHR11655:SF14">
    <property type="entry name" value="LARGE RIBOSOMAL SUBUNIT PROTEIN UL6M"/>
    <property type="match status" value="1"/>
</dbReference>
<dbReference type="Pfam" id="PF00347">
    <property type="entry name" value="Ribosomal_L6"/>
    <property type="match status" value="2"/>
</dbReference>
<dbReference type="PIRSF" id="PIRSF002162">
    <property type="entry name" value="Ribosomal_L6"/>
    <property type="match status" value="1"/>
</dbReference>
<dbReference type="PRINTS" id="PR00059">
    <property type="entry name" value="RIBOSOMALL6"/>
</dbReference>
<dbReference type="SUPFAM" id="SSF56053">
    <property type="entry name" value="Ribosomal protein L6"/>
    <property type="match status" value="2"/>
</dbReference>
<dbReference type="PROSITE" id="PS00525">
    <property type="entry name" value="RIBOSOMAL_L6_1"/>
    <property type="match status" value="1"/>
</dbReference>
<organism>
    <name type="scientific">Xanthomonas campestris pv. campestris (strain B100)</name>
    <dbReference type="NCBI Taxonomy" id="509169"/>
    <lineage>
        <taxon>Bacteria</taxon>
        <taxon>Pseudomonadati</taxon>
        <taxon>Pseudomonadota</taxon>
        <taxon>Gammaproteobacteria</taxon>
        <taxon>Lysobacterales</taxon>
        <taxon>Lysobacteraceae</taxon>
        <taxon>Xanthomonas</taxon>
    </lineage>
</organism>
<keyword id="KW-0687">Ribonucleoprotein</keyword>
<keyword id="KW-0689">Ribosomal protein</keyword>
<keyword id="KW-0694">RNA-binding</keyword>
<keyword id="KW-0699">rRNA-binding</keyword>